<protein>
    <recommendedName>
        <fullName evidence="1">Inosine/xanthosine triphosphatase</fullName>
        <shortName evidence="1">ITPase/XTPase</shortName>
        <ecNumber evidence="1">3.6.1.73</ecNumber>
    </recommendedName>
    <alternativeName>
        <fullName evidence="1">Non-canonical purine NTP phosphatase</fullName>
    </alternativeName>
    <alternativeName>
        <fullName evidence="1">Non-standard purine NTP phosphatase</fullName>
    </alternativeName>
    <alternativeName>
        <fullName evidence="1">Nucleoside-triphosphate phosphatase</fullName>
        <shortName evidence="1">NTPase</shortName>
    </alternativeName>
</protein>
<sequence>MHQVVCATTNPAKIQAILQAFHEIFGEGSCHIASVAVESGVPEQPFGSEETRAGARNRVANARRLLPEADFWVAIEAGIDGDSTFSWVVIENTSQRGEARSATLPLPAVILEKVREGEALGPVMSRYTGIDEIGRKEGAIGVFTAGKLTRTSVYHQAVILALSPFHNAVYQPLQA</sequence>
<keyword id="KW-0378">Hydrolase</keyword>
<keyword id="KW-0460">Magnesium</keyword>
<keyword id="KW-0464">Manganese</keyword>
<keyword id="KW-0479">Metal-binding</keyword>
<keyword id="KW-0546">Nucleotide metabolism</keyword>
<keyword id="KW-0547">Nucleotide-binding</keyword>
<keyword id="KW-1185">Reference proteome</keyword>
<organism>
    <name type="scientific">Escherichia coli O127:H6 (strain E2348/69 / EPEC)</name>
    <dbReference type="NCBI Taxonomy" id="574521"/>
    <lineage>
        <taxon>Bacteria</taxon>
        <taxon>Pseudomonadati</taxon>
        <taxon>Pseudomonadota</taxon>
        <taxon>Gammaproteobacteria</taxon>
        <taxon>Enterobacterales</taxon>
        <taxon>Enterobacteriaceae</taxon>
        <taxon>Escherichia</taxon>
    </lineage>
</organism>
<proteinExistence type="inferred from homology"/>
<name>NCPP_ECO27</name>
<gene>
    <name type="primary">yjjX</name>
    <name type="ordered locus">E2348C_4694</name>
</gene>
<accession>B7UR24</accession>
<dbReference type="EC" id="3.6.1.73" evidence="1"/>
<dbReference type="EMBL" id="FM180568">
    <property type="protein sequence ID" value="CAS12242.1"/>
    <property type="molecule type" value="Genomic_DNA"/>
</dbReference>
<dbReference type="RefSeq" id="WP_001339518.1">
    <property type="nucleotide sequence ID" value="NC_011601.1"/>
</dbReference>
<dbReference type="SMR" id="B7UR24"/>
<dbReference type="KEGG" id="ecg:E2348C_4694"/>
<dbReference type="HOGENOM" id="CLU_087417_1_0_6"/>
<dbReference type="Proteomes" id="UP000008205">
    <property type="component" value="Chromosome"/>
</dbReference>
<dbReference type="GO" id="GO:0103023">
    <property type="term" value="F:ITPase activity"/>
    <property type="evidence" value="ECO:0007669"/>
    <property type="project" value="UniProtKB-EC"/>
</dbReference>
<dbReference type="GO" id="GO:0046872">
    <property type="term" value="F:metal ion binding"/>
    <property type="evidence" value="ECO:0007669"/>
    <property type="project" value="UniProtKB-KW"/>
</dbReference>
<dbReference type="GO" id="GO:0000166">
    <property type="term" value="F:nucleotide binding"/>
    <property type="evidence" value="ECO:0007669"/>
    <property type="project" value="UniProtKB-KW"/>
</dbReference>
<dbReference type="GO" id="GO:0017111">
    <property type="term" value="F:ribonucleoside triphosphate phosphatase activity"/>
    <property type="evidence" value="ECO:0000250"/>
    <property type="project" value="UniProtKB"/>
</dbReference>
<dbReference type="GO" id="GO:0009117">
    <property type="term" value="P:nucleotide metabolic process"/>
    <property type="evidence" value="ECO:0007669"/>
    <property type="project" value="UniProtKB-KW"/>
</dbReference>
<dbReference type="GO" id="GO:0006772">
    <property type="term" value="P:thiamine metabolic process"/>
    <property type="evidence" value="ECO:0007669"/>
    <property type="project" value="TreeGrafter"/>
</dbReference>
<dbReference type="FunFam" id="3.90.950.10:FF:000002">
    <property type="entry name" value="Inosine/xanthosine triphosphatase"/>
    <property type="match status" value="1"/>
</dbReference>
<dbReference type="Gene3D" id="3.90.950.10">
    <property type="match status" value="1"/>
</dbReference>
<dbReference type="HAMAP" id="MF_00648">
    <property type="entry name" value="Non_canon_purine_NTPase_YjjX"/>
    <property type="match status" value="1"/>
</dbReference>
<dbReference type="InterPro" id="IPR029001">
    <property type="entry name" value="ITPase-like_fam"/>
</dbReference>
<dbReference type="InterPro" id="IPR002786">
    <property type="entry name" value="Non_canon_purine_NTPase"/>
</dbReference>
<dbReference type="InterPro" id="IPR026533">
    <property type="entry name" value="NTPase/PRRC1"/>
</dbReference>
<dbReference type="InterPro" id="IPR050299">
    <property type="entry name" value="YjjX_NTPase"/>
</dbReference>
<dbReference type="NCBIfam" id="TIGR00258">
    <property type="entry name" value="inosine/xanthosine triphosphatase"/>
    <property type="match status" value="1"/>
</dbReference>
<dbReference type="NCBIfam" id="NF003459">
    <property type="entry name" value="PRK05074.1"/>
    <property type="match status" value="1"/>
</dbReference>
<dbReference type="PANTHER" id="PTHR34699">
    <property type="match status" value="1"/>
</dbReference>
<dbReference type="PANTHER" id="PTHR34699:SF2">
    <property type="entry name" value="NON-CANONICAL PURINE NTP PHOSPHATASE_PRRC1 DOMAIN-CONTAINING PROTEIN"/>
    <property type="match status" value="1"/>
</dbReference>
<dbReference type="Pfam" id="PF01931">
    <property type="entry name" value="NTPase_I-T"/>
    <property type="match status" value="1"/>
</dbReference>
<dbReference type="SUPFAM" id="SSF52972">
    <property type="entry name" value="ITPase-like"/>
    <property type="match status" value="1"/>
</dbReference>
<evidence type="ECO:0000255" key="1">
    <source>
        <dbReference type="HAMAP-Rule" id="MF_00648"/>
    </source>
</evidence>
<comment type="function">
    <text evidence="1">Phosphatase that hydrolyzes non-canonical purine nucleotides such as XTP and ITP to their respective diphosphate derivatives. Probably excludes non-canonical purines from DNA/RNA precursor pool, thus preventing their incorporation into DNA/RNA and avoiding chromosomal lesions.</text>
</comment>
<comment type="catalytic activity">
    <reaction evidence="1">
        <text>XTP + H2O = XDP + phosphate + H(+)</text>
        <dbReference type="Rhea" id="RHEA:28406"/>
        <dbReference type="ChEBI" id="CHEBI:15377"/>
        <dbReference type="ChEBI" id="CHEBI:15378"/>
        <dbReference type="ChEBI" id="CHEBI:43474"/>
        <dbReference type="ChEBI" id="CHEBI:59884"/>
        <dbReference type="ChEBI" id="CHEBI:61314"/>
        <dbReference type="EC" id="3.6.1.73"/>
    </reaction>
</comment>
<comment type="catalytic activity">
    <reaction evidence="1">
        <text>ITP + H2O = IDP + phosphate + H(+)</text>
        <dbReference type="Rhea" id="RHEA:28330"/>
        <dbReference type="ChEBI" id="CHEBI:15377"/>
        <dbReference type="ChEBI" id="CHEBI:15378"/>
        <dbReference type="ChEBI" id="CHEBI:43474"/>
        <dbReference type="ChEBI" id="CHEBI:58280"/>
        <dbReference type="ChEBI" id="CHEBI:61402"/>
        <dbReference type="EC" id="3.6.1.73"/>
    </reaction>
</comment>
<comment type="cofactor">
    <cofactor evidence="1">
        <name>Mg(2+)</name>
        <dbReference type="ChEBI" id="CHEBI:18420"/>
    </cofactor>
    <cofactor evidence="1">
        <name>Mn(2+)</name>
        <dbReference type="ChEBI" id="CHEBI:29035"/>
    </cofactor>
    <text evidence="1">Binds 1 divalent metal cation per subunit; can use either Mg(2+) or Mn(2+).</text>
</comment>
<comment type="subunit">
    <text evidence="1">Homodimer.</text>
</comment>
<comment type="similarity">
    <text evidence="1">Belongs to the YjjX NTPase family.</text>
</comment>
<reference key="1">
    <citation type="journal article" date="2009" name="J. Bacteriol.">
        <title>Complete genome sequence and comparative genome analysis of enteropathogenic Escherichia coli O127:H6 strain E2348/69.</title>
        <authorList>
            <person name="Iguchi A."/>
            <person name="Thomson N.R."/>
            <person name="Ogura Y."/>
            <person name="Saunders D."/>
            <person name="Ooka T."/>
            <person name="Henderson I.R."/>
            <person name="Harris D."/>
            <person name="Asadulghani M."/>
            <person name="Kurokawa K."/>
            <person name="Dean P."/>
            <person name="Kenny B."/>
            <person name="Quail M.A."/>
            <person name="Thurston S."/>
            <person name="Dougan G."/>
            <person name="Hayashi T."/>
            <person name="Parkhill J."/>
            <person name="Frankel G."/>
        </authorList>
    </citation>
    <scope>NUCLEOTIDE SEQUENCE [LARGE SCALE GENOMIC DNA]</scope>
    <source>
        <strain>E2348/69 / EPEC</strain>
    </source>
</reference>
<feature type="chain" id="PRO_1000198085" description="Inosine/xanthosine triphosphatase">
    <location>
        <begin position="1"/>
        <end position="175"/>
    </location>
</feature>
<feature type="binding site" evidence="1">
    <location>
        <begin position="8"/>
        <end position="13"/>
    </location>
    <ligand>
        <name>substrate</name>
    </ligand>
</feature>
<feature type="binding site" evidence="1">
    <location>
        <position position="38"/>
    </location>
    <ligand>
        <name>Mg(2+)</name>
        <dbReference type="ChEBI" id="CHEBI:18420"/>
    </ligand>
</feature>
<feature type="binding site" evidence="1">
    <location>
        <begin position="68"/>
        <end position="69"/>
    </location>
    <ligand>
        <name>substrate</name>
    </ligand>
</feature>
<feature type="binding site" evidence="1">
    <location>
        <position position="68"/>
    </location>
    <ligand>
        <name>Mg(2+)</name>
        <dbReference type="ChEBI" id="CHEBI:18420"/>
    </ligand>
</feature>